<reference key="1">
    <citation type="journal article" date="1973" name="Int. J. Pept. Protein Res.">
        <title>The primary structures of the alpha and beta polypeptide chains of adult hemoglobin of the Hanumam langur (Presbytis entellus).</title>
        <authorList>
            <person name="Matsuda G."/>
            <person name="Maita T."/>
            <person name="Nakashima Y."/>
            <person name="Barnabas J."/>
            <person name="Ranjekar P.K."/>
            <person name="Gandhi N.S."/>
        </authorList>
    </citation>
    <scope>PROTEIN SEQUENCE</scope>
</reference>
<protein>
    <recommendedName>
        <fullName>Hemoglobin subunit alpha</fullName>
    </recommendedName>
    <alternativeName>
        <fullName>Alpha-globin</fullName>
    </alternativeName>
    <alternativeName>
        <fullName>Hemoglobin alpha chain</fullName>
    </alternativeName>
    <component>
        <recommendedName>
            <fullName evidence="2">Hemopressin</fullName>
        </recommendedName>
    </component>
</protein>
<keyword id="KW-0007">Acetylation</keyword>
<keyword id="KW-0903">Direct protein sequencing</keyword>
<keyword id="KW-0349">Heme</keyword>
<keyword id="KW-0408">Iron</keyword>
<keyword id="KW-0479">Metal-binding</keyword>
<keyword id="KW-0561">Oxygen transport</keyword>
<keyword id="KW-0597">Phosphoprotein</keyword>
<keyword id="KW-0813">Transport</keyword>
<organism>
    <name type="scientific">Semnopithecus entellus</name>
    <name type="common">Northern plains gray langur</name>
    <name type="synonym">Presbytis entellus</name>
    <dbReference type="NCBI Taxonomy" id="88029"/>
    <lineage>
        <taxon>Eukaryota</taxon>
        <taxon>Metazoa</taxon>
        <taxon>Chordata</taxon>
        <taxon>Craniata</taxon>
        <taxon>Vertebrata</taxon>
        <taxon>Euteleostomi</taxon>
        <taxon>Mammalia</taxon>
        <taxon>Eutheria</taxon>
        <taxon>Euarchontoglires</taxon>
        <taxon>Primates</taxon>
        <taxon>Haplorrhini</taxon>
        <taxon>Catarrhini</taxon>
        <taxon>Cercopithecidae</taxon>
        <taxon>Colobinae</taxon>
        <taxon>Semnopithecus</taxon>
    </lineage>
</organism>
<proteinExistence type="evidence at protein level"/>
<dbReference type="PIR" id="A02250">
    <property type="entry name" value="HAMQP"/>
</dbReference>
<dbReference type="BMRB" id="P01924"/>
<dbReference type="SMR" id="P01924"/>
<dbReference type="GO" id="GO:0072562">
    <property type="term" value="C:blood microparticle"/>
    <property type="evidence" value="ECO:0007669"/>
    <property type="project" value="TreeGrafter"/>
</dbReference>
<dbReference type="GO" id="GO:0031838">
    <property type="term" value="C:haptoglobin-hemoglobin complex"/>
    <property type="evidence" value="ECO:0007669"/>
    <property type="project" value="TreeGrafter"/>
</dbReference>
<dbReference type="GO" id="GO:0005833">
    <property type="term" value="C:hemoglobin complex"/>
    <property type="evidence" value="ECO:0007669"/>
    <property type="project" value="InterPro"/>
</dbReference>
<dbReference type="GO" id="GO:0031720">
    <property type="term" value="F:haptoglobin binding"/>
    <property type="evidence" value="ECO:0007669"/>
    <property type="project" value="TreeGrafter"/>
</dbReference>
<dbReference type="GO" id="GO:0020037">
    <property type="term" value="F:heme binding"/>
    <property type="evidence" value="ECO:0007669"/>
    <property type="project" value="InterPro"/>
</dbReference>
<dbReference type="GO" id="GO:0005506">
    <property type="term" value="F:iron ion binding"/>
    <property type="evidence" value="ECO:0007669"/>
    <property type="project" value="InterPro"/>
</dbReference>
<dbReference type="GO" id="GO:0043177">
    <property type="term" value="F:organic acid binding"/>
    <property type="evidence" value="ECO:0007669"/>
    <property type="project" value="TreeGrafter"/>
</dbReference>
<dbReference type="GO" id="GO:0019825">
    <property type="term" value="F:oxygen binding"/>
    <property type="evidence" value="ECO:0007669"/>
    <property type="project" value="InterPro"/>
</dbReference>
<dbReference type="GO" id="GO:0005344">
    <property type="term" value="F:oxygen carrier activity"/>
    <property type="evidence" value="ECO:0007669"/>
    <property type="project" value="UniProtKB-KW"/>
</dbReference>
<dbReference type="GO" id="GO:0004601">
    <property type="term" value="F:peroxidase activity"/>
    <property type="evidence" value="ECO:0007669"/>
    <property type="project" value="TreeGrafter"/>
</dbReference>
<dbReference type="GO" id="GO:0042744">
    <property type="term" value="P:hydrogen peroxide catabolic process"/>
    <property type="evidence" value="ECO:0007669"/>
    <property type="project" value="TreeGrafter"/>
</dbReference>
<dbReference type="CDD" id="cd08927">
    <property type="entry name" value="Hb-alpha-like"/>
    <property type="match status" value="1"/>
</dbReference>
<dbReference type="FunFam" id="1.10.490.10:FF:000002">
    <property type="entry name" value="Hemoglobin subunit alpha"/>
    <property type="match status" value="1"/>
</dbReference>
<dbReference type="Gene3D" id="1.10.490.10">
    <property type="entry name" value="Globins"/>
    <property type="match status" value="1"/>
</dbReference>
<dbReference type="InterPro" id="IPR000971">
    <property type="entry name" value="Globin"/>
</dbReference>
<dbReference type="InterPro" id="IPR009050">
    <property type="entry name" value="Globin-like_sf"/>
</dbReference>
<dbReference type="InterPro" id="IPR012292">
    <property type="entry name" value="Globin/Proto"/>
</dbReference>
<dbReference type="InterPro" id="IPR002338">
    <property type="entry name" value="Hemoglobin_a-typ"/>
</dbReference>
<dbReference type="InterPro" id="IPR050056">
    <property type="entry name" value="Hemoglobin_oxygen_transport"/>
</dbReference>
<dbReference type="InterPro" id="IPR002339">
    <property type="entry name" value="Hemoglobin_pi"/>
</dbReference>
<dbReference type="PANTHER" id="PTHR11442">
    <property type="entry name" value="HEMOGLOBIN FAMILY MEMBER"/>
    <property type="match status" value="1"/>
</dbReference>
<dbReference type="PANTHER" id="PTHR11442:SF48">
    <property type="entry name" value="HEMOGLOBIN SUBUNIT ALPHA"/>
    <property type="match status" value="1"/>
</dbReference>
<dbReference type="Pfam" id="PF00042">
    <property type="entry name" value="Globin"/>
    <property type="match status" value="1"/>
</dbReference>
<dbReference type="PRINTS" id="PR00612">
    <property type="entry name" value="ALPHAHAEM"/>
</dbReference>
<dbReference type="PRINTS" id="PR00815">
    <property type="entry name" value="PIHAEM"/>
</dbReference>
<dbReference type="SUPFAM" id="SSF46458">
    <property type="entry name" value="Globin-like"/>
    <property type="match status" value="1"/>
</dbReference>
<dbReference type="PROSITE" id="PS01033">
    <property type="entry name" value="GLOBIN"/>
    <property type="match status" value="1"/>
</dbReference>
<feature type="chain" id="PRO_0000052737" description="Hemoglobin subunit alpha">
    <location>
        <begin position="1"/>
        <end position="141"/>
    </location>
</feature>
<feature type="peptide" id="PRO_0000455929" description="Hemopressin" evidence="2">
    <location>
        <begin position="95"/>
        <end position="103"/>
    </location>
</feature>
<feature type="domain" description="Globin" evidence="4">
    <location>
        <begin position="1"/>
        <end position="141"/>
    </location>
</feature>
<feature type="binding site" evidence="4">
    <location>
        <position position="58"/>
    </location>
    <ligand>
        <name>O2</name>
        <dbReference type="ChEBI" id="CHEBI:15379"/>
    </ligand>
</feature>
<feature type="binding site" description="proximal binding residue" evidence="4">
    <location>
        <position position="87"/>
    </location>
    <ligand>
        <name>heme b</name>
        <dbReference type="ChEBI" id="CHEBI:60344"/>
    </ligand>
    <ligandPart>
        <name>Fe</name>
        <dbReference type="ChEBI" id="CHEBI:18248"/>
    </ligandPart>
</feature>
<feature type="modified residue" description="Phosphoserine" evidence="3">
    <location>
        <position position="3"/>
    </location>
</feature>
<feature type="modified residue" description="N6-succinyllysine" evidence="1">
    <location>
        <position position="7"/>
    </location>
</feature>
<feature type="modified residue" description="Phosphothreonine" evidence="3">
    <location>
        <position position="8"/>
    </location>
</feature>
<feature type="modified residue" description="N6-succinyllysine" evidence="1">
    <location>
        <position position="11"/>
    </location>
</feature>
<feature type="modified residue" description="N6-acetyllysine; alternate" evidence="3">
    <location>
        <position position="16"/>
    </location>
</feature>
<feature type="modified residue" description="N6-succinyllysine; alternate" evidence="1">
    <location>
        <position position="16"/>
    </location>
</feature>
<feature type="modified residue" description="Phosphotyrosine" evidence="3">
    <location>
        <position position="24"/>
    </location>
</feature>
<feature type="modified residue" description="Phosphoserine" evidence="3">
    <location>
        <position position="35"/>
    </location>
</feature>
<feature type="modified residue" description="N6-succinyllysine" evidence="1">
    <location>
        <position position="40"/>
    </location>
</feature>
<feature type="modified residue" description="Phosphoserine" evidence="3">
    <location>
        <position position="49"/>
    </location>
</feature>
<feature type="modified residue" description="Phosphoserine" evidence="1">
    <location>
        <position position="102"/>
    </location>
</feature>
<feature type="modified residue" description="Phosphothreonine" evidence="1">
    <location>
        <position position="108"/>
    </location>
</feature>
<feature type="modified residue" description="Phosphoserine" evidence="1">
    <location>
        <position position="124"/>
    </location>
</feature>
<feature type="modified residue" description="Phosphoserine" evidence="1">
    <location>
        <position position="131"/>
    </location>
</feature>
<feature type="modified residue" description="Phosphothreonine" evidence="1">
    <location>
        <position position="134"/>
    </location>
</feature>
<feature type="modified residue" description="Phosphothreonine" evidence="1">
    <location>
        <position position="137"/>
    </location>
</feature>
<feature type="modified residue" description="Phosphoserine" evidence="1">
    <location>
        <position position="138"/>
    </location>
</feature>
<gene>
    <name type="primary">HBA</name>
</gene>
<evidence type="ECO:0000250" key="1">
    <source>
        <dbReference type="UniProtKB" id="P01942"/>
    </source>
</evidence>
<evidence type="ECO:0000250" key="2">
    <source>
        <dbReference type="UniProtKB" id="P01946"/>
    </source>
</evidence>
<evidence type="ECO:0000250" key="3">
    <source>
        <dbReference type="UniProtKB" id="P69905"/>
    </source>
</evidence>
<evidence type="ECO:0000255" key="4">
    <source>
        <dbReference type="PROSITE-ProRule" id="PRU00238"/>
    </source>
</evidence>
<name>HBA_SEMEN</name>
<comment type="function">
    <text>Involved in oxygen transport from the lung to the various peripheral tissues.</text>
</comment>
<comment type="function">
    <molecule>Hemopressin</molecule>
    <text evidence="2">Hemopressin acts as an antagonist peptide of the cannabinoid receptor CNR1. Hemopressin-binding efficiently blocks cannabinoid receptor CNR1 and subsequent signaling.</text>
</comment>
<comment type="subunit">
    <text>Heterotetramer of two alpha chains and two beta chains.</text>
</comment>
<comment type="tissue specificity">
    <text>Red blood cells.</text>
</comment>
<comment type="similarity">
    <text evidence="4">Belongs to the globin family.</text>
</comment>
<sequence>VLSPADKTNVKAAWGKVGGHGGEYGAEALERMFLSFPTTKTYFPHFDLSHGSAQVKGHGKKVADALTNAVAHVDDMPHALSALSDLHAHKLRVDPVNFKLLSHCLLVTLAAHLPAEFTPAVHASLDKFLASVSTVLTSKYR</sequence>
<accession>P01924</accession>